<name>KITH_ASFWA</name>
<evidence type="ECO:0000250" key="1"/>
<evidence type="ECO:0000255" key="2"/>
<evidence type="ECO:0000305" key="3"/>
<protein>
    <recommendedName>
        <fullName>Thymidine kinase</fullName>
        <shortName>TDK</shortName>
        <ecNumber>2.7.1.21</ecNumber>
    </recommendedName>
</protein>
<sequence>MNIIRKLKPGTISLVLGPMFAGKTTFLIHCIYMLEHLEKKVVFIKSTKNTRDKTIKTHSGIQLRPKHCKIIESTQLSDVGSLTDIHAVVIDEAHFFDDLIKCRTWADEEKIIILAGLNASFEQKMFPPIVRIFPYCSWVKYIGRTCMKCNRHNACFNVRKNADKTLILAGGSELYVTCCNNCLKNTFIKQLQPIKY</sequence>
<reference key="1">
    <citation type="submission" date="2003-03" db="EMBL/GenBank/DDBJ databases">
        <title>African swine fever virus genomes.</title>
        <authorList>
            <person name="Kutish G.F."/>
            <person name="Rock D.L."/>
        </authorList>
    </citation>
    <scope>NUCLEOTIDE SEQUENCE [LARGE SCALE GENOMIC DNA]</scope>
</reference>
<organismHost>
    <name type="scientific">Ornithodoros</name>
    <name type="common">relapsing fever ticks</name>
    <dbReference type="NCBI Taxonomy" id="6937"/>
</organismHost>
<organismHost>
    <name type="scientific">Phacochoerus aethiopicus</name>
    <name type="common">Warthog</name>
    <dbReference type="NCBI Taxonomy" id="85517"/>
</organismHost>
<organismHost>
    <name type="scientific">Phacochoerus africanus</name>
    <name type="common">Warthog</name>
    <dbReference type="NCBI Taxonomy" id="41426"/>
</organismHost>
<organismHost>
    <name type="scientific">Potamochoerus larvatus</name>
    <name type="common">Bushpig</name>
    <dbReference type="NCBI Taxonomy" id="273792"/>
</organismHost>
<organismHost>
    <name type="scientific">Sus scrofa</name>
    <name type="common">Pig</name>
    <dbReference type="NCBI Taxonomy" id="9823"/>
</organismHost>
<gene>
    <name type="ordered locus">War-060</name>
</gene>
<organism>
    <name type="scientific">African swine fever virus (isolate Warthog/Namibia/Wart80/1980)</name>
    <name type="common">ASFV</name>
    <dbReference type="NCBI Taxonomy" id="561444"/>
    <lineage>
        <taxon>Viruses</taxon>
        <taxon>Varidnaviria</taxon>
        <taxon>Bamfordvirae</taxon>
        <taxon>Nucleocytoviricota</taxon>
        <taxon>Pokkesviricetes</taxon>
        <taxon>Asfuvirales</taxon>
        <taxon>Asfarviridae</taxon>
        <taxon>Asfivirus</taxon>
        <taxon>African swine fever virus</taxon>
    </lineage>
</organism>
<keyword id="KW-0067">ATP-binding</keyword>
<keyword id="KW-0237">DNA synthesis</keyword>
<keyword id="KW-0418">Kinase</keyword>
<keyword id="KW-0479">Metal-binding</keyword>
<keyword id="KW-0547">Nucleotide-binding</keyword>
<keyword id="KW-0808">Transferase</keyword>
<keyword id="KW-0843">Virulence</keyword>
<keyword id="KW-0862">Zinc</keyword>
<proteinExistence type="inferred from homology"/>
<comment type="function">
    <text evidence="1">Phosphorylates thymidine. ASFV replicates in the cytoplasm of infected cells and contains genes encoding a number of enzymes needed for DNA synthesis, including thymidine kinase. Important for growth in swine macrophages in vitro and is a virus virulence factor in swine (By similarity).</text>
</comment>
<comment type="catalytic activity">
    <reaction>
        <text>thymidine + ATP = dTMP + ADP + H(+)</text>
        <dbReference type="Rhea" id="RHEA:19129"/>
        <dbReference type="ChEBI" id="CHEBI:15378"/>
        <dbReference type="ChEBI" id="CHEBI:17748"/>
        <dbReference type="ChEBI" id="CHEBI:30616"/>
        <dbReference type="ChEBI" id="CHEBI:63528"/>
        <dbReference type="ChEBI" id="CHEBI:456216"/>
        <dbReference type="EC" id="2.7.1.21"/>
    </reaction>
</comment>
<comment type="similarity">
    <text evidence="3">Belongs to the thymidine kinase family.</text>
</comment>
<feature type="chain" id="PRO_0000355225" description="Thymidine kinase">
    <location>
        <begin position="1"/>
        <end position="196"/>
    </location>
</feature>
<feature type="active site" description="Proton acceptor" evidence="2">
    <location>
        <position position="92"/>
    </location>
</feature>
<feature type="binding site" evidence="1">
    <location>
        <begin position="17"/>
        <end position="24"/>
    </location>
    <ligand>
        <name>ATP</name>
        <dbReference type="ChEBI" id="CHEBI:30616"/>
    </ligand>
</feature>
<feature type="binding site" evidence="1">
    <location>
        <position position="121"/>
    </location>
    <ligand>
        <name>substrate</name>
    </ligand>
</feature>
<feature type="binding site" evidence="1">
    <location>
        <position position="146"/>
    </location>
    <ligand>
        <name>Zn(2+)</name>
        <dbReference type="ChEBI" id="CHEBI:29105"/>
    </ligand>
</feature>
<feature type="binding site" evidence="1">
    <location>
        <position position="149"/>
    </location>
    <ligand>
        <name>Zn(2+)</name>
        <dbReference type="ChEBI" id="CHEBI:29105"/>
    </ligand>
</feature>
<feature type="binding site" evidence="1">
    <location>
        <begin position="166"/>
        <end position="170"/>
    </location>
    <ligand>
        <name>substrate</name>
    </ligand>
</feature>
<feature type="binding site" evidence="1">
    <location>
        <position position="179"/>
    </location>
    <ligand>
        <name>Zn(2+)</name>
        <dbReference type="ChEBI" id="CHEBI:29105"/>
    </ligand>
</feature>
<feature type="binding site" evidence="1">
    <location>
        <position position="182"/>
    </location>
    <ligand>
        <name>Zn(2+)</name>
        <dbReference type="ChEBI" id="CHEBI:29105"/>
    </ligand>
</feature>
<accession>P0C8I6</accession>
<dbReference type="EC" id="2.7.1.21"/>
<dbReference type="EMBL" id="AY261366">
    <property type="status" value="NOT_ANNOTATED_CDS"/>
    <property type="molecule type" value="Genomic_DNA"/>
</dbReference>
<dbReference type="SMR" id="P0C8I6"/>
<dbReference type="Proteomes" id="UP000000858">
    <property type="component" value="Segment"/>
</dbReference>
<dbReference type="GO" id="GO:0005524">
    <property type="term" value="F:ATP binding"/>
    <property type="evidence" value="ECO:0007669"/>
    <property type="project" value="UniProtKB-KW"/>
</dbReference>
<dbReference type="GO" id="GO:0046872">
    <property type="term" value="F:metal ion binding"/>
    <property type="evidence" value="ECO:0007669"/>
    <property type="project" value="UniProtKB-KW"/>
</dbReference>
<dbReference type="GO" id="GO:0004797">
    <property type="term" value="F:thymidine kinase activity"/>
    <property type="evidence" value="ECO:0007669"/>
    <property type="project" value="UniProtKB-EC"/>
</dbReference>
<dbReference type="GO" id="GO:0071897">
    <property type="term" value="P:DNA biosynthetic process"/>
    <property type="evidence" value="ECO:0007669"/>
    <property type="project" value="UniProtKB-KW"/>
</dbReference>
<dbReference type="GO" id="GO:0046104">
    <property type="term" value="P:thymidine metabolic process"/>
    <property type="evidence" value="ECO:0007669"/>
    <property type="project" value="TreeGrafter"/>
</dbReference>
<dbReference type="Gene3D" id="3.30.60.20">
    <property type="match status" value="1"/>
</dbReference>
<dbReference type="Gene3D" id="3.40.50.300">
    <property type="entry name" value="P-loop containing nucleotide triphosphate hydrolases"/>
    <property type="match status" value="1"/>
</dbReference>
<dbReference type="InterPro" id="IPR027417">
    <property type="entry name" value="P-loop_NTPase"/>
</dbReference>
<dbReference type="InterPro" id="IPR001267">
    <property type="entry name" value="Thymidine_kinase"/>
</dbReference>
<dbReference type="InterPro" id="IPR020633">
    <property type="entry name" value="Thymidine_kinase_CS"/>
</dbReference>
<dbReference type="PANTHER" id="PTHR11441">
    <property type="entry name" value="THYMIDINE KINASE"/>
    <property type="match status" value="1"/>
</dbReference>
<dbReference type="PANTHER" id="PTHR11441:SF0">
    <property type="entry name" value="THYMIDINE KINASE, CYTOSOLIC"/>
    <property type="match status" value="1"/>
</dbReference>
<dbReference type="Pfam" id="PF00265">
    <property type="entry name" value="TK"/>
    <property type="match status" value="1"/>
</dbReference>
<dbReference type="PIRSF" id="PIRSF035805">
    <property type="entry name" value="TK_cell"/>
    <property type="match status" value="1"/>
</dbReference>
<dbReference type="SUPFAM" id="SSF52540">
    <property type="entry name" value="P-loop containing nucleoside triphosphate hydrolases"/>
    <property type="match status" value="1"/>
</dbReference>
<dbReference type="PROSITE" id="PS00603">
    <property type="entry name" value="TK_CELLULAR_TYPE"/>
    <property type="match status" value="1"/>
</dbReference>